<gene>
    <name type="primary">EPO</name>
</gene>
<accession>P07865</accession>
<sequence>MGVHECPAWLWLLLSLVSLPLGLPVPGAPPRLICDSRVLERYLLEAKEAENVTMGCSESCSLNENITVPDTKVNFYAWKRMEVGQQAVEVWQGLALLSEAVLRGQAVLANSSQPFEPLQLHMDKAISGLRSITTLLRALGAQEAISLPDAASAAPLRTITADTFCKLFRVYSNFLRGKLKLYTGEACRRGDR</sequence>
<name>EPO_MACFA</name>
<evidence type="ECO:0000250" key="1"/>
<evidence type="ECO:0000250" key="2">
    <source>
        <dbReference type="UniProtKB" id="P01588"/>
    </source>
</evidence>
<evidence type="ECO:0000305" key="3"/>
<keyword id="KW-1015">Disulfide bond</keyword>
<keyword id="KW-0265">Erythrocyte maturation</keyword>
<keyword id="KW-0325">Glycoprotein</keyword>
<keyword id="KW-0372">Hormone</keyword>
<keyword id="KW-1185">Reference proteome</keyword>
<keyword id="KW-0964">Secreted</keyword>
<keyword id="KW-0732">Signal</keyword>
<proteinExistence type="evidence at transcript level"/>
<feature type="signal peptide" evidence="1">
    <location>
        <begin position="1"/>
        <end position="27"/>
    </location>
</feature>
<feature type="chain" id="PRO_0000008403" description="Erythropoietin">
    <location>
        <begin position="28"/>
        <end position="192"/>
    </location>
</feature>
<feature type="glycosylation site" description="N-linked (GlcNAc...) asparagine" evidence="1">
    <location>
        <position position="51"/>
    </location>
</feature>
<feature type="glycosylation site" description="N-linked (GlcNAc...) asparagine" evidence="1">
    <location>
        <position position="65"/>
    </location>
</feature>
<feature type="glycosylation site" description="N-linked (GlcNAc...) asparagine" evidence="1">
    <location>
        <position position="110"/>
    </location>
</feature>
<feature type="glycosylation site" description="O-linked (GalNAc...) serine" evidence="1">
    <location>
        <position position="152"/>
    </location>
</feature>
<feature type="disulfide bond" evidence="1">
    <location>
        <begin position="34"/>
        <end position="187"/>
    </location>
</feature>
<feature type="disulfide bond" evidence="1">
    <location>
        <begin position="56"/>
        <end position="60"/>
    </location>
</feature>
<organism>
    <name type="scientific">Macaca fascicularis</name>
    <name type="common">Crab-eating macaque</name>
    <name type="synonym">Cynomolgus monkey</name>
    <dbReference type="NCBI Taxonomy" id="9541"/>
    <lineage>
        <taxon>Eukaryota</taxon>
        <taxon>Metazoa</taxon>
        <taxon>Chordata</taxon>
        <taxon>Craniata</taxon>
        <taxon>Vertebrata</taxon>
        <taxon>Euteleostomi</taxon>
        <taxon>Mammalia</taxon>
        <taxon>Eutheria</taxon>
        <taxon>Euarchontoglires</taxon>
        <taxon>Primates</taxon>
        <taxon>Haplorrhini</taxon>
        <taxon>Catarrhini</taxon>
        <taxon>Cercopithecidae</taxon>
        <taxon>Cercopithecinae</taxon>
        <taxon>Macaca</taxon>
    </lineage>
</organism>
<reference key="1">
    <citation type="journal article" date="1986" name="Gene">
        <title>Monkey erythropoietin gene: cloning, expression and comparison with the human erythropoietin gene.</title>
        <authorList>
            <person name="Lin F.-K."/>
            <person name="Lin C.-H."/>
            <person name="Lai P.-H."/>
            <person name="Browne J.K."/>
            <person name="Egrie J.C."/>
            <person name="Smalling R."/>
            <person name="Fox G.M."/>
            <person name="Chen K.K."/>
            <person name="Castro M."/>
            <person name="Suggs S."/>
        </authorList>
    </citation>
    <scope>NUCLEOTIDE SEQUENCE [MRNA]</scope>
</reference>
<protein>
    <recommendedName>
        <fullName>Erythropoietin</fullName>
    </recommendedName>
</protein>
<comment type="function">
    <text evidence="2">Hormone involved in the regulation of erythrocyte proliferation and differentiation and the maintenance of a physiological level of circulating erythrocyte mass. Binds to EPOR leading to EPOR dimerization and JAK2 activation thereby activating specific downstream effectors, including STAT1 and STAT3.</text>
</comment>
<comment type="subcellular location">
    <subcellularLocation>
        <location>Secreted</location>
    </subcellularLocation>
</comment>
<comment type="tissue specificity">
    <text>Produced by kidney or liver of adult mammals and by liver of fetal or neonatal mammals.</text>
</comment>
<comment type="similarity">
    <text evidence="3">Belongs to the EPO/TPO family.</text>
</comment>
<dbReference type="EMBL" id="M18189">
    <property type="protein sequence ID" value="AAA36841.1"/>
    <property type="molecule type" value="mRNA"/>
</dbReference>
<dbReference type="PIR" id="JQ0173">
    <property type="entry name" value="JQ0173"/>
</dbReference>
<dbReference type="SMR" id="P07865"/>
<dbReference type="STRING" id="9541.ENSMFAP00000025902"/>
<dbReference type="GlyCosmos" id="P07865">
    <property type="glycosylation" value="4 sites, No reported glycans"/>
</dbReference>
<dbReference type="eggNOG" id="ENOG502RXRC">
    <property type="taxonomic scope" value="Eukaryota"/>
</dbReference>
<dbReference type="Proteomes" id="UP000233100">
    <property type="component" value="Unplaced"/>
</dbReference>
<dbReference type="GO" id="GO:0005615">
    <property type="term" value="C:extracellular space"/>
    <property type="evidence" value="ECO:0007669"/>
    <property type="project" value="TreeGrafter"/>
</dbReference>
<dbReference type="GO" id="GO:0005125">
    <property type="term" value="F:cytokine activity"/>
    <property type="evidence" value="ECO:0007669"/>
    <property type="project" value="TreeGrafter"/>
</dbReference>
<dbReference type="GO" id="GO:0005128">
    <property type="term" value="F:erythropoietin receptor binding"/>
    <property type="evidence" value="ECO:0000250"/>
    <property type="project" value="UniProtKB"/>
</dbReference>
<dbReference type="GO" id="GO:0005179">
    <property type="term" value="F:hormone activity"/>
    <property type="evidence" value="ECO:0007669"/>
    <property type="project" value="UniProtKB-KW"/>
</dbReference>
<dbReference type="GO" id="GO:0030295">
    <property type="term" value="F:protein kinase activator activity"/>
    <property type="evidence" value="ECO:0007669"/>
    <property type="project" value="TreeGrafter"/>
</dbReference>
<dbReference type="GO" id="GO:0030218">
    <property type="term" value="P:erythrocyte differentiation"/>
    <property type="evidence" value="ECO:0000250"/>
    <property type="project" value="UniProtKB"/>
</dbReference>
<dbReference type="GO" id="GO:0043249">
    <property type="term" value="P:erythrocyte maturation"/>
    <property type="evidence" value="ECO:0007669"/>
    <property type="project" value="UniProtKB-KW"/>
</dbReference>
<dbReference type="GO" id="GO:0038162">
    <property type="term" value="P:erythropoietin-mediated signaling pathway"/>
    <property type="evidence" value="ECO:0000250"/>
    <property type="project" value="UniProtKB"/>
</dbReference>
<dbReference type="GO" id="GO:0008284">
    <property type="term" value="P:positive regulation of cell population proliferation"/>
    <property type="evidence" value="ECO:0007669"/>
    <property type="project" value="TreeGrafter"/>
</dbReference>
<dbReference type="GO" id="GO:0046579">
    <property type="term" value="P:positive regulation of Ras protein signal transduction"/>
    <property type="evidence" value="ECO:0007669"/>
    <property type="project" value="TreeGrafter"/>
</dbReference>
<dbReference type="FunFam" id="1.20.1250.10:FF:000013">
    <property type="entry name" value="Erythropoietin"/>
    <property type="match status" value="1"/>
</dbReference>
<dbReference type="Gene3D" id="1.20.1250.10">
    <property type="match status" value="1"/>
</dbReference>
<dbReference type="InterPro" id="IPR009079">
    <property type="entry name" value="4_helix_cytokine-like_core"/>
</dbReference>
<dbReference type="InterPro" id="IPR019767">
    <property type="entry name" value="EPO/TPO_CS"/>
</dbReference>
<dbReference type="InterPro" id="IPR001323">
    <property type="entry name" value="EPO_TPO"/>
</dbReference>
<dbReference type="InterPro" id="IPR003013">
    <property type="entry name" value="Erythroptn"/>
</dbReference>
<dbReference type="PANTHER" id="PTHR10370">
    <property type="entry name" value="ERYTHROPOIETIN"/>
    <property type="match status" value="1"/>
</dbReference>
<dbReference type="PANTHER" id="PTHR10370:SF0">
    <property type="entry name" value="ERYTHROPOIETIN"/>
    <property type="match status" value="1"/>
</dbReference>
<dbReference type="Pfam" id="PF00758">
    <property type="entry name" value="EPO_TPO"/>
    <property type="match status" value="1"/>
</dbReference>
<dbReference type="PIRSF" id="PIRSF001951">
    <property type="entry name" value="EPO"/>
    <property type="match status" value="1"/>
</dbReference>
<dbReference type="PRINTS" id="PR00272">
    <property type="entry name" value="ERYTHROPTN"/>
</dbReference>
<dbReference type="SUPFAM" id="SSF47266">
    <property type="entry name" value="4-helical cytokines"/>
    <property type="match status" value="1"/>
</dbReference>
<dbReference type="PROSITE" id="PS00817">
    <property type="entry name" value="EPO_TPO"/>
    <property type="match status" value="1"/>
</dbReference>